<gene>
    <name evidence="1" type="primary">NP</name>
</gene>
<comment type="function">
    <text evidence="1">Encapsidates the negative strand viral RNA, protecting it from nucleases. The encapsidated genomic RNA is termed the ribonucleoprotein (RNP) and serves as template for transcription and replication. The RNP needs to be localized in the host nucleus to start an infectious cycle, but is too large to diffuse through the nuclear pore complex. NP comprises at least 2 nuclear localization signals that are responsible for the active RNP import into the nucleus through cellular importin alpha/beta pathway. Later in the infection, nclear export of RNPs are mediated through viral proteins NEP interacting with M1 which binds nucleoproteins. It is possible that nucleoprotein binds directly host exportin-1/XPO1 and plays an active role in RNPs nuclear export. M1 interaction with RNP seems to hide nucleoprotein's nuclear localization signals. Soon after a virion infects a new cell, M1 dissociates from the RNP under acidification of the virion driven by M2 protein. Dissociation of M1 from RNP unmasks nucleoprotein's nuclear localization signals, targeting the RNP to the nucleus.</text>
</comment>
<comment type="subunit">
    <text evidence="1">Homomultimerizes to form the nucleocapsid. May bind host exportin-1/XPO1. Binds to viral genomic RNA. Protein-RNA contacts are mediated by a combination of electrostatic interactions between positively charged residues and the phosphate backbone and planar interactions between aromatic side chains and bases.</text>
</comment>
<comment type="subcellular location">
    <subcellularLocation>
        <location evidence="1">Virion</location>
    </subcellularLocation>
    <subcellularLocation>
        <location evidence="1">Host nucleus</location>
    </subcellularLocation>
</comment>
<comment type="PTM">
    <text evidence="1">Late in virus-infected cells, may be cleaved from a 56-kDa protein to a 53-kDa protein by a cellular caspase. This cleavage might be a marker for the onset of apoptosis in infected cells or have a specific function in virus host interaction.</text>
</comment>
<comment type="similarity">
    <text evidence="1">Belongs to the influenza viruses nucleoprotein family.</text>
</comment>
<evidence type="ECO:0000255" key="1">
    <source>
        <dbReference type="HAMAP-Rule" id="MF_04070"/>
    </source>
</evidence>
<evidence type="ECO:0000256" key="2">
    <source>
        <dbReference type="SAM" id="MobiDB-lite"/>
    </source>
</evidence>
<proteinExistence type="inferred from homology"/>
<organismHost>
    <name type="scientific">Aves</name>
    <dbReference type="NCBI Taxonomy" id="8782"/>
</organismHost>
<organismHost>
    <name type="scientific">Homo sapiens</name>
    <name type="common">Human</name>
    <dbReference type="NCBI Taxonomy" id="9606"/>
</organismHost>
<organismHost>
    <name type="scientific">Sus scrofa</name>
    <name type="common">Pig</name>
    <dbReference type="NCBI Taxonomy" id="9823"/>
</organismHost>
<dbReference type="EMBL" id="M63751">
    <property type="protein sequence ID" value="AAA52250.1"/>
    <property type="molecule type" value="Genomic_RNA"/>
</dbReference>
<dbReference type="SMR" id="P26071"/>
<dbReference type="GO" id="GO:0019029">
    <property type="term" value="C:helical viral capsid"/>
    <property type="evidence" value="ECO:0007669"/>
    <property type="project" value="UniProtKB-UniRule"/>
</dbReference>
<dbReference type="GO" id="GO:0043657">
    <property type="term" value="C:host cell"/>
    <property type="evidence" value="ECO:0007669"/>
    <property type="project" value="GOC"/>
</dbReference>
<dbReference type="GO" id="GO:0042025">
    <property type="term" value="C:host cell nucleus"/>
    <property type="evidence" value="ECO:0007669"/>
    <property type="project" value="UniProtKB-SubCell"/>
</dbReference>
<dbReference type="GO" id="GO:1990904">
    <property type="term" value="C:ribonucleoprotein complex"/>
    <property type="evidence" value="ECO:0007669"/>
    <property type="project" value="UniProtKB-KW"/>
</dbReference>
<dbReference type="GO" id="GO:0019013">
    <property type="term" value="C:viral nucleocapsid"/>
    <property type="evidence" value="ECO:0007669"/>
    <property type="project" value="UniProtKB-UniRule"/>
</dbReference>
<dbReference type="GO" id="GO:0003723">
    <property type="term" value="F:RNA binding"/>
    <property type="evidence" value="ECO:0007669"/>
    <property type="project" value="UniProtKB-UniRule"/>
</dbReference>
<dbReference type="GO" id="GO:0005198">
    <property type="term" value="F:structural molecule activity"/>
    <property type="evidence" value="ECO:0007669"/>
    <property type="project" value="UniProtKB-UniRule"/>
</dbReference>
<dbReference type="GO" id="GO:0046718">
    <property type="term" value="P:symbiont entry into host cell"/>
    <property type="evidence" value="ECO:0007669"/>
    <property type="project" value="UniProtKB-KW"/>
</dbReference>
<dbReference type="GO" id="GO:0075732">
    <property type="term" value="P:viral penetration into host nucleus"/>
    <property type="evidence" value="ECO:0007669"/>
    <property type="project" value="UniProtKB-UniRule"/>
</dbReference>
<dbReference type="HAMAP" id="MF_04070">
    <property type="entry name" value="INFV_NCAP"/>
    <property type="match status" value="1"/>
</dbReference>
<dbReference type="InterPro" id="IPR002141">
    <property type="entry name" value="Flu_NP"/>
</dbReference>
<dbReference type="Pfam" id="PF00506">
    <property type="entry name" value="Flu_NP"/>
    <property type="match status" value="1"/>
</dbReference>
<dbReference type="SUPFAM" id="SSF161003">
    <property type="entry name" value="flu NP-like"/>
    <property type="match status" value="1"/>
</dbReference>
<keyword id="KW-0167">Capsid protein</keyword>
<keyword id="KW-1139">Helical capsid protein</keyword>
<keyword id="KW-1048">Host nucleus</keyword>
<keyword id="KW-0945">Host-virus interaction</keyword>
<keyword id="KW-0687">Ribonucleoprotein</keyword>
<keyword id="KW-0694">RNA-binding</keyword>
<keyword id="KW-0543">Viral nucleoprotein</keyword>
<keyword id="KW-1163">Viral penetration into host nucleus</keyword>
<keyword id="KW-0946">Virion</keyword>
<keyword id="KW-1160">Virus entry into host cell</keyword>
<protein>
    <recommendedName>
        <fullName evidence="1">Nucleoprotein</fullName>
    </recommendedName>
    <alternativeName>
        <fullName evidence="1">Nucleocapsid protein</fullName>
        <shortName evidence="1">Protein N</shortName>
    </alternativeName>
</protein>
<feature type="chain" id="PRO_0000079043" description="Nucleoprotein">
    <location>
        <begin position="1"/>
        <end position="498"/>
    </location>
</feature>
<feature type="region of interest" description="Disordered" evidence="2">
    <location>
        <begin position="1"/>
        <end position="21"/>
    </location>
</feature>
<feature type="short sequence motif" description="Unconventional nuclear localization signal" evidence="1">
    <location>
        <begin position="1"/>
        <end position="18"/>
    </location>
</feature>
<feature type="short sequence motif" description="Bipartite nuclear localization signal" evidence="1">
    <location>
        <begin position="198"/>
        <end position="216"/>
    </location>
</feature>
<feature type="compositionally biased region" description="Basic and acidic residues" evidence="2">
    <location>
        <begin position="8"/>
        <end position="21"/>
    </location>
</feature>
<organism>
    <name type="scientific">Influenza A virus (strain A/England/19/1955 H1N1)</name>
    <dbReference type="NCBI Taxonomy" id="383541"/>
    <lineage>
        <taxon>Viruses</taxon>
        <taxon>Riboviria</taxon>
        <taxon>Orthornavirae</taxon>
        <taxon>Negarnaviricota</taxon>
        <taxon>Polyploviricotina</taxon>
        <taxon>Insthoviricetes</taxon>
        <taxon>Articulavirales</taxon>
        <taxon>Orthomyxoviridae</taxon>
        <taxon>Alphainfluenzavirus</taxon>
        <taxon>Alphainfluenzavirus influenzae</taxon>
        <taxon>Influenza A virus</taxon>
    </lineage>
</organism>
<reference key="1">
    <citation type="journal article" date="1991" name="J. Virol.">
        <title>Evolution of influenza A virus nucleoprotein genes: implications for the origins of H1N1 human and classical swine viruses.</title>
        <authorList>
            <person name="Gorman O.T."/>
            <person name="Bean W.J."/>
            <person name="Kawaoka Y."/>
            <person name="Donatelli I."/>
            <person name="Guo Y."/>
            <person name="Webster R.G."/>
        </authorList>
    </citation>
    <scope>NUCLEOTIDE SEQUENCE [GENOMIC RNA]</scope>
</reference>
<accession>P26071</accession>
<name>NCAP_I55A0</name>
<sequence length="498" mass="56197">MASQGTKRSYEQMETDGERQNATEIRASVGKMIDGIGRFYIQMCTELKLSDYEGRLIQNSLTIERMVLSAFDERRNKYLEEHPSAGKDPKKTGGPIYKRVDRKWMRELVLYDKEEIRRIWRQANNGDDATAGLTHMMIWHSNLNDTTYQRTRALVRTGMDPRMCSLMQGSTLPRRSGAAGAAVKGVGTMVMELIRMIKRGINDRNFWRGENGRKTRIAYERMCNILKGKFQTAAQRAMMDQVRESRNPGNAEIEDLIFLARSALILRGSVAHKSCLPACVYGPAVASGYDFEKEGYSLVGIDPFKLLQNSQVYSLIRPNENPAHKSQLVWMACNSAAFEDLRVSSFIRGTKVIPRGKLSTRGVQIASNENMDTMESSTLELRSRYWAIRTRSGGNTNQQRASAGQISIQPTFSVQRNLPFDKTTIMAAFTGNAEGRTSDMRAEIIRMMESAKPEEVSFQGRGVFELSDEKAANPIVPSFDMSNEGSYFFGDNAEEYDN</sequence>